<protein>
    <recommendedName>
        <fullName evidence="1">4-hydroxy-tetrahydrodipicolinate synthase</fullName>
        <shortName evidence="1">HTPA synthase</shortName>
        <ecNumber evidence="1">4.3.3.7</ecNumber>
    </recommendedName>
</protein>
<keyword id="KW-0002">3D-structure</keyword>
<keyword id="KW-0028">Amino-acid biosynthesis</keyword>
<keyword id="KW-0963">Cytoplasm</keyword>
<keyword id="KW-0220">Diaminopimelate biosynthesis</keyword>
<keyword id="KW-0456">Lyase</keyword>
<keyword id="KW-0457">Lysine biosynthesis</keyword>
<keyword id="KW-1185">Reference proteome</keyword>
<keyword id="KW-0704">Schiff base</keyword>
<proteinExistence type="evidence at protein level"/>
<organism>
    <name type="scientific">Campylobacter jejuni subsp. jejuni serotype O:2 (strain ATCC 700819 / NCTC 11168)</name>
    <dbReference type="NCBI Taxonomy" id="192222"/>
    <lineage>
        <taxon>Bacteria</taxon>
        <taxon>Pseudomonadati</taxon>
        <taxon>Campylobacterota</taxon>
        <taxon>Epsilonproteobacteria</taxon>
        <taxon>Campylobacterales</taxon>
        <taxon>Campylobacteraceae</taxon>
        <taxon>Campylobacter</taxon>
    </lineage>
</organism>
<feature type="chain" id="PRO_0000103093" description="4-hydroxy-tetrahydrodipicolinate synthase">
    <location>
        <begin position="1"/>
        <end position="298"/>
    </location>
</feature>
<feature type="active site" description="Proton donor/acceptor" evidence="1">
    <location>
        <position position="137"/>
    </location>
</feature>
<feature type="active site" description="Schiff-base intermediate with substrate" evidence="1">
    <location>
        <position position="166"/>
    </location>
</feature>
<feature type="binding site" evidence="1">
    <location>
        <position position="48"/>
    </location>
    <ligand>
        <name>pyruvate</name>
        <dbReference type="ChEBI" id="CHEBI:15361"/>
    </ligand>
</feature>
<feature type="binding site" evidence="1">
    <location>
        <position position="207"/>
    </location>
    <ligand>
        <name>pyruvate</name>
        <dbReference type="ChEBI" id="CHEBI:15361"/>
    </ligand>
</feature>
<feature type="site" description="Part of a proton relay during catalysis" evidence="1">
    <location>
        <position position="47"/>
    </location>
</feature>
<feature type="site" description="Part of a proton relay during catalysis" evidence="1">
    <location>
        <position position="111"/>
    </location>
</feature>
<feature type="strand" evidence="3">
    <location>
        <begin position="8"/>
        <end position="12"/>
    </location>
</feature>
<feature type="helix" evidence="3">
    <location>
        <begin position="24"/>
        <end position="36"/>
    </location>
</feature>
<feature type="strand" evidence="3">
    <location>
        <begin position="41"/>
        <end position="43"/>
    </location>
</feature>
<feature type="helix" evidence="3">
    <location>
        <begin position="47"/>
        <end position="49"/>
    </location>
</feature>
<feature type="helix" evidence="3">
    <location>
        <begin position="51"/>
        <end position="53"/>
    </location>
</feature>
<feature type="helix" evidence="3">
    <location>
        <begin position="56"/>
        <end position="70"/>
    </location>
</feature>
<feature type="strand" evidence="3">
    <location>
        <begin position="76"/>
        <end position="80"/>
    </location>
</feature>
<feature type="helix" evidence="3">
    <location>
        <begin position="86"/>
        <end position="98"/>
    </location>
</feature>
<feature type="strand" evidence="3">
    <location>
        <begin position="102"/>
        <end position="107"/>
    </location>
</feature>
<feature type="helix" evidence="3">
    <location>
        <begin position="116"/>
        <end position="129"/>
    </location>
</feature>
<feature type="strand" evidence="3">
    <location>
        <begin position="134"/>
        <end position="138"/>
    </location>
</feature>
<feature type="helix" evidence="3">
    <location>
        <begin position="140"/>
        <end position="143"/>
    </location>
</feature>
<feature type="helix" evidence="3">
    <location>
        <begin position="149"/>
        <end position="158"/>
    </location>
</feature>
<feature type="strand" evidence="3">
    <location>
        <begin position="162"/>
        <end position="167"/>
    </location>
</feature>
<feature type="helix" evidence="3">
    <location>
        <begin position="172"/>
        <end position="181"/>
    </location>
</feature>
<feature type="strand" evidence="3">
    <location>
        <begin position="185"/>
        <end position="189"/>
    </location>
</feature>
<feature type="helix" evidence="3">
    <location>
        <begin position="192"/>
        <end position="194"/>
    </location>
</feature>
<feature type="helix" evidence="3">
    <location>
        <begin position="195"/>
        <end position="200"/>
    </location>
</feature>
<feature type="strand" evidence="3">
    <location>
        <begin position="205"/>
        <end position="209"/>
    </location>
</feature>
<feature type="helix" evidence="3">
    <location>
        <begin position="210"/>
        <end position="212"/>
    </location>
</feature>
<feature type="helix" evidence="3">
    <location>
        <begin position="215"/>
        <end position="226"/>
    </location>
</feature>
<feature type="helix" evidence="3">
    <location>
        <begin position="230"/>
        <end position="246"/>
    </location>
</feature>
<feature type="strand" evidence="3">
    <location>
        <begin position="249"/>
        <end position="251"/>
    </location>
</feature>
<feature type="helix" evidence="3">
    <location>
        <begin position="254"/>
        <end position="262"/>
    </location>
</feature>
<feature type="strand" evidence="3">
    <location>
        <begin position="265"/>
        <end position="267"/>
    </location>
</feature>
<feature type="helix" evidence="3">
    <location>
        <begin position="280"/>
        <end position="290"/>
    </location>
</feature>
<gene>
    <name evidence="1" type="primary">dapA</name>
    <name type="ordered locus">Cj0806</name>
</gene>
<reference key="1">
    <citation type="journal article" date="2000" name="Nature">
        <title>The genome sequence of the food-borne pathogen Campylobacter jejuni reveals hypervariable sequences.</title>
        <authorList>
            <person name="Parkhill J."/>
            <person name="Wren B.W."/>
            <person name="Mungall K.L."/>
            <person name="Ketley J.M."/>
            <person name="Churcher C.M."/>
            <person name="Basham D."/>
            <person name="Chillingworth T."/>
            <person name="Davies R.M."/>
            <person name="Feltwell T."/>
            <person name="Holroyd S."/>
            <person name="Jagels K."/>
            <person name="Karlyshev A.V."/>
            <person name="Moule S."/>
            <person name="Pallen M.J."/>
            <person name="Penn C.W."/>
            <person name="Quail M.A."/>
            <person name="Rajandream M.A."/>
            <person name="Rutherford K.M."/>
            <person name="van Vliet A.H.M."/>
            <person name="Whitehead S."/>
            <person name="Barrell B.G."/>
        </authorList>
    </citation>
    <scope>NUCLEOTIDE SEQUENCE [LARGE SCALE GENOMIC DNA]</scope>
    <source>
        <strain>ATCC 700819 / NCTC 11168</strain>
    </source>
</reference>
<comment type="function">
    <text evidence="1">Catalyzes the condensation of (S)-aspartate-beta-semialdehyde [(S)-ASA] and pyruvate to 4-hydroxy-tetrahydrodipicolinate (HTPA).</text>
</comment>
<comment type="catalytic activity">
    <reaction evidence="1">
        <text>L-aspartate 4-semialdehyde + pyruvate = (2S,4S)-4-hydroxy-2,3,4,5-tetrahydrodipicolinate + H2O + H(+)</text>
        <dbReference type="Rhea" id="RHEA:34171"/>
        <dbReference type="ChEBI" id="CHEBI:15361"/>
        <dbReference type="ChEBI" id="CHEBI:15377"/>
        <dbReference type="ChEBI" id="CHEBI:15378"/>
        <dbReference type="ChEBI" id="CHEBI:67139"/>
        <dbReference type="ChEBI" id="CHEBI:537519"/>
        <dbReference type="EC" id="4.3.3.7"/>
    </reaction>
</comment>
<comment type="pathway">
    <text evidence="1">Amino-acid biosynthesis; L-lysine biosynthesis via DAP pathway; (S)-tetrahydrodipicolinate from L-aspartate: step 3/4.</text>
</comment>
<comment type="subunit">
    <text evidence="1">Homotetramer; dimer of dimers.</text>
</comment>
<comment type="subcellular location">
    <subcellularLocation>
        <location evidence="1">Cytoplasm</location>
    </subcellularLocation>
</comment>
<comment type="similarity">
    <text evidence="1">Belongs to the DapA family.</text>
</comment>
<comment type="caution">
    <text evidence="2">Was originally thought to be a dihydrodipicolinate synthase (DHDPS), catalyzing the condensation of (S)-aspartate-beta-semialdehyde [(S)-ASA] and pyruvate to dihydrodipicolinate (DHDP). However, it was shown in E.coli that the product of the enzymatic reaction is not dihydrodipicolinate but in fact (4S)-4-hydroxy-2,3,4,5-tetrahydro-(2S)-dipicolinic acid (HTPA), and that the consecutive dehydration reaction leading to DHDP is not spontaneous but catalyzed by DapB.</text>
</comment>
<dbReference type="EC" id="4.3.3.7" evidence="1"/>
<dbReference type="EMBL" id="AL111168">
    <property type="protein sequence ID" value="CAL34934.1"/>
    <property type="molecule type" value="Genomic_DNA"/>
</dbReference>
<dbReference type="PIR" id="F81352">
    <property type="entry name" value="F81352"/>
</dbReference>
<dbReference type="RefSeq" id="WP_002852574.1">
    <property type="nucleotide sequence ID" value="NZ_SZUC01000001.1"/>
</dbReference>
<dbReference type="RefSeq" id="YP_002344213.1">
    <property type="nucleotide sequence ID" value="NC_002163.1"/>
</dbReference>
<dbReference type="PDB" id="3LER">
    <property type="method" value="X-ray"/>
    <property type="resolution" value="1.84 A"/>
    <property type="chains" value="A/B/C/D=1-298"/>
</dbReference>
<dbReference type="PDB" id="3M5V">
    <property type="method" value="X-ray"/>
    <property type="resolution" value="1.80 A"/>
    <property type="chains" value="A/B/C/D=1-298"/>
</dbReference>
<dbReference type="PDB" id="4LY8">
    <property type="method" value="X-ray"/>
    <property type="resolution" value="1.70 A"/>
    <property type="chains" value="A/B/C/D=1-298"/>
</dbReference>
<dbReference type="PDB" id="4M19">
    <property type="method" value="X-ray"/>
    <property type="resolution" value="2.00 A"/>
    <property type="chains" value="A/B/C/D=1-298"/>
</dbReference>
<dbReference type="PDB" id="4MLJ">
    <property type="method" value="X-ray"/>
    <property type="resolution" value="2.30 A"/>
    <property type="chains" value="A/B/C/D=1-298"/>
</dbReference>
<dbReference type="PDB" id="4MLR">
    <property type="method" value="X-ray"/>
    <property type="resolution" value="2.20 A"/>
    <property type="chains" value="A/B/C/D/E/F/G/H=1-298"/>
</dbReference>
<dbReference type="PDB" id="4R53">
    <property type="method" value="X-ray"/>
    <property type="resolution" value="2.00 A"/>
    <property type="chains" value="A/B/C/D=1-298"/>
</dbReference>
<dbReference type="PDB" id="5F1U">
    <property type="method" value="X-ray"/>
    <property type="resolution" value="2.35 A"/>
    <property type="chains" value="A/B/C/D=2-298"/>
</dbReference>
<dbReference type="PDB" id="5F1V">
    <property type="method" value="X-ray"/>
    <property type="resolution" value="2.20 A"/>
    <property type="chains" value="A/B/C/D=2-298"/>
</dbReference>
<dbReference type="PDB" id="6TZU">
    <property type="method" value="X-ray"/>
    <property type="resolution" value="1.80 A"/>
    <property type="chains" value="A/B/C/D/E/F=1-298"/>
</dbReference>
<dbReference type="PDB" id="6U01">
    <property type="method" value="X-ray"/>
    <property type="resolution" value="1.87 A"/>
    <property type="chains" value="A/B/C/D/E/F=1-298"/>
</dbReference>
<dbReference type="PDB" id="7KEL">
    <property type="method" value="X-ray"/>
    <property type="resolution" value="2.10 A"/>
    <property type="chains" value="A/B/C/D/E/F/G/H/I/J/K/L=1-298"/>
</dbReference>
<dbReference type="PDB" id="7KG2">
    <property type="method" value="X-ray"/>
    <property type="resolution" value="1.89 A"/>
    <property type="chains" value="A/B/C/D/E/F=1-298"/>
</dbReference>
<dbReference type="PDB" id="7KG5">
    <property type="method" value="X-ray"/>
    <property type="resolution" value="1.95 A"/>
    <property type="chains" value="A/B/C/D/E/F=1-298"/>
</dbReference>
<dbReference type="PDB" id="7KG9">
    <property type="method" value="X-ray"/>
    <property type="resolution" value="2.06 A"/>
    <property type="chains" value="A/B/C/D/E/F=1-298"/>
</dbReference>
<dbReference type="PDB" id="7KH4">
    <property type="method" value="X-ray"/>
    <property type="resolution" value="1.75 A"/>
    <property type="chains" value="A/B/C/D/E/F=1-298"/>
</dbReference>
<dbReference type="PDB" id="7KK1">
    <property type="method" value="X-ray"/>
    <property type="resolution" value="1.77 A"/>
    <property type="chains" value="A/B/C/D/E/F=1-298"/>
</dbReference>
<dbReference type="PDB" id="7KKD">
    <property type="method" value="X-ray"/>
    <property type="resolution" value="1.60 A"/>
    <property type="chains" value="A/B/C/D/E/F=1-298"/>
</dbReference>
<dbReference type="PDB" id="7KKG">
    <property type="method" value="X-ray"/>
    <property type="resolution" value="1.64 A"/>
    <property type="chains" value="A/B/C/D/E/F=1-298"/>
</dbReference>
<dbReference type="PDB" id="7KKT">
    <property type="method" value="X-ray"/>
    <property type="resolution" value="1.71 A"/>
    <property type="chains" value="A/B/C/D/E/F=1-298"/>
</dbReference>
<dbReference type="PDB" id="7KLQ">
    <property type="method" value="X-ray"/>
    <property type="resolution" value="2.50 A"/>
    <property type="chains" value="A/B/C/D/E/F=1-298"/>
</dbReference>
<dbReference type="PDB" id="7KLS">
    <property type="method" value="X-ray"/>
    <property type="resolution" value="2.59 A"/>
    <property type="chains" value="A/B/C/D/E/F=1-298"/>
</dbReference>
<dbReference type="PDB" id="7KLT">
    <property type="method" value="X-ray"/>
    <property type="resolution" value="1.97 A"/>
    <property type="chains" value="A/B/C/D/E/F=1-298"/>
</dbReference>
<dbReference type="PDB" id="7KLY">
    <property type="method" value="X-ray"/>
    <property type="resolution" value="1.67 A"/>
    <property type="chains" value="A/B/C/D/E/F=1-298"/>
</dbReference>
<dbReference type="PDB" id="7KM0">
    <property type="method" value="X-ray"/>
    <property type="resolution" value="2.60 A"/>
    <property type="chains" value="A/B/C/D/E/F=1-298"/>
</dbReference>
<dbReference type="PDB" id="7KM1">
    <property type="method" value="X-ray"/>
    <property type="resolution" value="1.84 A"/>
    <property type="chains" value="A/B/C/D/E/F=1-298"/>
</dbReference>
<dbReference type="PDB" id="7KN2">
    <property type="method" value="X-ray"/>
    <property type="resolution" value="2.53 A"/>
    <property type="chains" value="A/B/C/D/E/F=1-298"/>
</dbReference>
<dbReference type="PDB" id="7KN9">
    <property type="method" value="X-ray"/>
    <property type="resolution" value="2.07 A"/>
    <property type="chains" value="A/B/C/D/E/F=1-298"/>
</dbReference>
<dbReference type="PDB" id="7KNZ">
    <property type="method" value="X-ray"/>
    <property type="resolution" value="2.28 A"/>
    <property type="chains" value="A/B/C/D/E/F=1-298"/>
</dbReference>
<dbReference type="PDB" id="7KO1">
    <property type="method" value="X-ray"/>
    <property type="resolution" value="2.50 A"/>
    <property type="chains" value="A/B/C/D/E/F=1-298"/>
</dbReference>
<dbReference type="PDB" id="7KO3">
    <property type="method" value="X-ray"/>
    <property type="resolution" value="2.22 A"/>
    <property type="chains" value="A/B/C/D/E/F=1-298"/>
</dbReference>
<dbReference type="PDB" id="7KOC">
    <property type="method" value="X-ray"/>
    <property type="resolution" value="2.06 A"/>
    <property type="chains" value="A/B/C/D/E/F=1-298"/>
</dbReference>
<dbReference type="PDB" id="7KPC">
    <property type="method" value="X-ray"/>
    <property type="resolution" value="1.76 A"/>
    <property type="chains" value="A/B/C/D/E/F=1-298"/>
</dbReference>
<dbReference type="PDB" id="7KPE">
    <property type="method" value="X-ray"/>
    <property type="resolution" value="2.06 A"/>
    <property type="chains" value="A/B/C/D/E/F=1-298"/>
</dbReference>
<dbReference type="PDB" id="7KR7">
    <property type="method" value="X-ray"/>
    <property type="resolution" value="2.22 A"/>
    <property type="chains" value="A/B/C/D/E/F=1-298"/>
</dbReference>
<dbReference type="PDB" id="7KR8">
    <property type="method" value="X-ray"/>
    <property type="resolution" value="2.12 A"/>
    <property type="chains" value="A/B/C/D/E/F=1-298"/>
</dbReference>
<dbReference type="PDB" id="7KTO">
    <property type="method" value="X-ray"/>
    <property type="resolution" value="2.13 A"/>
    <property type="chains" value="A/B/C/D/E/F=1-298"/>
</dbReference>
<dbReference type="PDB" id="7KU6">
    <property type="method" value="X-ray"/>
    <property type="resolution" value="2.81 A"/>
    <property type="chains" value="A/B/C/D/E/F=1-298"/>
</dbReference>
<dbReference type="PDB" id="7KUZ">
    <property type="method" value="X-ray"/>
    <property type="resolution" value="2.25 A"/>
    <property type="chains" value="A/B/C/D/E/F=1-298"/>
</dbReference>
<dbReference type="PDB" id="7KWF">
    <property type="method" value="X-ray"/>
    <property type="resolution" value="2.82 A"/>
    <property type="chains" value="A/B/C/D/E/F=1-298"/>
</dbReference>
<dbReference type="PDB" id="7KWN">
    <property type="method" value="X-ray"/>
    <property type="resolution" value="2.24 A"/>
    <property type="chains" value="A/B/C/D/E/F=1-298"/>
</dbReference>
<dbReference type="PDB" id="7KWP">
    <property type="method" value="X-ray"/>
    <property type="resolution" value="2.26 A"/>
    <property type="chains" value="A/B/C/D/E/F=1-298"/>
</dbReference>
<dbReference type="PDB" id="7KX1">
    <property type="method" value="X-ray"/>
    <property type="resolution" value="2.04 A"/>
    <property type="chains" value="A/B/C/D/E/F=1-298"/>
</dbReference>
<dbReference type="PDB" id="7KXG">
    <property type="method" value="X-ray"/>
    <property type="resolution" value="2.28 A"/>
    <property type="chains" value="A/B/C/D/E/F=1-298"/>
</dbReference>
<dbReference type="PDB" id="7KXH">
    <property type="method" value="X-ray"/>
    <property type="resolution" value="1.94 A"/>
    <property type="chains" value="A/B/C/D/E/F=1-298"/>
</dbReference>
<dbReference type="PDB" id="7KZ2">
    <property type="method" value="X-ray"/>
    <property type="resolution" value="1.90 A"/>
    <property type="chains" value="A/B/C/D/E/F=1-298"/>
</dbReference>
<dbReference type="PDB" id="7L4B">
    <property type="method" value="X-ray"/>
    <property type="resolution" value="2.42 A"/>
    <property type="chains" value="A/B/C/D/E/F/G/H/I/J/K/L=1-298"/>
</dbReference>
<dbReference type="PDB" id="7LBD">
    <property type="method" value="X-ray"/>
    <property type="resolution" value="1.99 A"/>
    <property type="chains" value="A/B/C/D/E/F=1-298"/>
</dbReference>
<dbReference type="PDB" id="7LCF">
    <property type="method" value="X-ray"/>
    <property type="resolution" value="2.69 A"/>
    <property type="chains" value="A/B/C/D/E/F/G/H/I/J/K/L=1-298"/>
</dbReference>
<dbReference type="PDB" id="7M06">
    <property type="method" value="X-ray"/>
    <property type="resolution" value="2.70 A"/>
    <property type="chains" value="A/B/C/D=1-298"/>
</dbReference>
<dbReference type="PDBsum" id="3LER"/>
<dbReference type="PDBsum" id="3M5V"/>
<dbReference type="PDBsum" id="4LY8"/>
<dbReference type="PDBsum" id="4M19"/>
<dbReference type="PDBsum" id="4MLJ"/>
<dbReference type="PDBsum" id="4MLR"/>
<dbReference type="PDBsum" id="4R53"/>
<dbReference type="PDBsum" id="5F1U"/>
<dbReference type="PDBsum" id="5F1V"/>
<dbReference type="PDBsum" id="6TZU"/>
<dbReference type="PDBsum" id="6U01"/>
<dbReference type="PDBsum" id="7KEL"/>
<dbReference type="PDBsum" id="7KG2"/>
<dbReference type="PDBsum" id="7KG5"/>
<dbReference type="PDBsum" id="7KG9"/>
<dbReference type="PDBsum" id="7KH4"/>
<dbReference type="PDBsum" id="7KK1"/>
<dbReference type="PDBsum" id="7KKD"/>
<dbReference type="PDBsum" id="7KKG"/>
<dbReference type="PDBsum" id="7KKT"/>
<dbReference type="PDBsum" id="7KLQ"/>
<dbReference type="PDBsum" id="7KLS"/>
<dbReference type="PDBsum" id="7KLT"/>
<dbReference type="PDBsum" id="7KLY"/>
<dbReference type="PDBsum" id="7KM0"/>
<dbReference type="PDBsum" id="7KM1"/>
<dbReference type="PDBsum" id="7KN2"/>
<dbReference type="PDBsum" id="7KN9"/>
<dbReference type="PDBsum" id="7KNZ"/>
<dbReference type="PDBsum" id="7KO1"/>
<dbReference type="PDBsum" id="7KO3"/>
<dbReference type="PDBsum" id="7KOC"/>
<dbReference type="PDBsum" id="7KPC"/>
<dbReference type="PDBsum" id="7KPE"/>
<dbReference type="PDBsum" id="7KR7"/>
<dbReference type="PDBsum" id="7KR8"/>
<dbReference type="PDBsum" id="7KTO"/>
<dbReference type="PDBsum" id="7KU6"/>
<dbReference type="PDBsum" id="7KUZ"/>
<dbReference type="PDBsum" id="7KWF"/>
<dbReference type="PDBsum" id="7KWN"/>
<dbReference type="PDBsum" id="7KWP"/>
<dbReference type="PDBsum" id="7KX1"/>
<dbReference type="PDBsum" id="7KXG"/>
<dbReference type="PDBsum" id="7KXH"/>
<dbReference type="PDBsum" id="7KZ2"/>
<dbReference type="PDBsum" id="7L4B"/>
<dbReference type="PDBsum" id="7LBD"/>
<dbReference type="PDBsum" id="7LCF"/>
<dbReference type="PDBsum" id="7M06"/>
<dbReference type="SASBDB" id="Q9PPB4"/>
<dbReference type="SMR" id="Q9PPB4"/>
<dbReference type="IntAct" id="Q9PPB4">
    <property type="interactions" value="18"/>
</dbReference>
<dbReference type="STRING" id="192222.Cj0806"/>
<dbReference type="PaxDb" id="192222-Cj0806"/>
<dbReference type="EnsemblBacteria" id="CAL34934">
    <property type="protein sequence ID" value="CAL34934"/>
    <property type="gene ID" value="Cj0806"/>
</dbReference>
<dbReference type="GeneID" id="905109"/>
<dbReference type="KEGG" id="cje:Cj0806"/>
<dbReference type="PATRIC" id="fig|192222.6.peg.794"/>
<dbReference type="eggNOG" id="COG0329">
    <property type="taxonomic scope" value="Bacteria"/>
</dbReference>
<dbReference type="HOGENOM" id="CLU_049343_7_0_7"/>
<dbReference type="OrthoDB" id="9782828at2"/>
<dbReference type="UniPathway" id="UPA00034">
    <property type="reaction ID" value="UER00017"/>
</dbReference>
<dbReference type="EvolutionaryTrace" id="Q9PPB4"/>
<dbReference type="Proteomes" id="UP000000799">
    <property type="component" value="Chromosome"/>
</dbReference>
<dbReference type="GO" id="GO:0005829">
    <property type="term" value="C:cytosol"/>
    <property type="evidence" value="ECO:0007669"/>
    <property type="project" value="TreeGrafter"/>
</dbReference>
<dbReference type="GO" id="GO:0008840">
    <property type="term" value="F:4-hydroxy-tetrahydrodipicolinate synthase activity"/>
    <property type="evidence" value="ECO:0007669"/>
    <property type="project" value="UniProtKB-UniRule"/>
</dbReference>
<dbReference type="GO" id="GO:0019877">
    <property type="term" value="P:diaminopimelate biosynthetic process"/>
    <property type="evidence" value="ECO:0007669"/>
    <property type="project" value="UniProtKB-UniRule"/>
</dbReference>
<dbReference type="GO" id="GO:0009089">
    <property type="term" value="P:lysine biosynthetic process via diaminopimelate"/>
    <property type="evidence" value="ECO:0007669"/>
    <property type="project" value="UniProtKB-UniRule"/>
</dbReference>
<dbReference type="CDD" id="cd00950">
    <property type="entry name" value="DHDPS"/>
    <property type="match status" value="1"/>
</dbReference>
<dbReference type="Gene3D" id="3.20.20.70">
    <property type="entry name" value="Aldolase class I"/>
    <property type="match status" value="1"/>
</dbReference>
<dbReference type="HAMAP" id="MF_00418">
    <property type="entry name" value="DapA"/>
    <property type="match status" value="1"/>
</dbReference>
<dbReference type="InterPro" id="IPR013785">
    <property type="entry name" value="Aldolase_TIM"/>
</dbReference>
<dbReference type="InterPro" id="IPR005263">
    <property type="entry name" value="DapA"/>
</dbReference>
<dbReference type="InterPro" id="IPR002220">
    <property type="entry name" value="DapA-like"/>
</dbReference>
<dbReference type="InterPro" id="IPR020625">
    <property type="entry name" value="Schiff_base-form_aldolases_AS"/>
</dbReference>
<dbReference type="InterPro" id="IPR020624">
    <property type="entry name" value="Schiff_base-form_aldolases_CS"/>
</dbReference>
<dbReference type="NCBIfam" id="TIGR00674">
    <property type="entry name" value="dapA"/>
    <property type="match status" value="1"/>
</dbReference>
<dbReference type="PANTHER" id="PTHR12128:SF66">
    <property type="entry name" value="4-HYDROXY-2-OXOGLUTARATE ALDOLASE, MITOCHONDRIAL"/>
    <property type="match status" value="1"/>
</dbReference>
<dbReference type="PANTHER" id="PTHR12128">
    <property type="entry name" value="DIHYDRODIPICOLINATE SYNTHASE"/>
    <property type="match status" value="1"/>
</dbReference>
<dbReference type="Pfam" id="PF00701">
    <property type="entry name" value="DHDPS"/>
    <property type="match status" value="1"/>
</dbReference>
<dbReference type="PIRSF" id="PIRSF001365">
    <property type="entry name" value="DHDPS"/>
    <property type="match status" value="1"/>
</dbReference>
<dbReference type="PRINTS" id="PR00146">
    <property type="entry name" value="DHPICSNTHASE"/>
</dbReference>
<dbReference type="SMART" id="SM01130">
    <property type="entry name" value="DHDPS"/>
    <property type="match status" value="1"/>
</dbReference>
<dbReference type="SUPFAM" id="SSF51569">
    <property type="entry name" value="Aldolase"/>
    <property type="match status" value="1"/>
</dbReference>
<dbReference type="PROSITE" id="PS00665">
    <property type="entry name" value="DHDPS_1"/>
    <property type="match status" value="1"/>
</dbReference>
<dbReference type="PROSITE" id="PS00666">
    <property type="entry name" value="DHDPS_2"/>
    <property type="match status" value="1"/>
</dbReference>
<sequence>MDKNIIIGAMTALITPFKNGKVDEQSYARLIKRQIENGIDAVVPVGTTGESATLTHEEHRTCIEIAVETCKGTKVKVLAGAGSNATHEAVGLAKFAKEHGADGILSVAPYYNKPTQQGLYEHYKAIAQSVDIPVLLYNVPGRTGCEISTDTIIKLFRDCENIYGVKEASGNIDKCVDLLAHEPRMMLISGEDAINYPILSNGGKGVISVTSNLLPDMISALTHFALDENYKEAKKINDELYNINKILFCESNPIPIKTAMYLAGLIESLEFRLPLCSPSKENFAKIEEVMKKYKIKGF</sequence>
<evidence type="ECO:0000255" key="1">
    <source>
        <dbReference type="HAMAP-Rule" id="MF_00418"/>
    </source>
</evidence>
<evidence type="ECO:0000305" key="2"/>
<evidence type="ECO:0007829" key="3">
    <source>
        <dbReference type="PDB" id="7KKD"/>
    </source>
</evidence>
<name>DAPA_CAMJE</name>
<accession>Q9PPB4</accession>
<accession>Q0PA84</accession>